<reference key="1">
    <citation type="journal article" date="1999" name="J. Appl. Microbiol.">
        <title>Sequence, assembly and analysis of pXO1 and pXO2.</title>
        <authorList>
            <person name="Okinaka R.T."/>
            <person name="Cloud K."/>
            <person name="Hampton O."/>
            <person name="Hoffmaster A."/>
            <person name="Hill K.K."/>
            <person name="Keim P."/>
            <person name="Koehler T."/>
            <person name="Lamke G."/>
            <person name="Kumano S."/>
            <person name="Manter D."/>
            <person name="Martinez Y."/>
            <person name="Ricke D."/>
            <person name="Svensson R."/>
            <person name="Jackson P.J."/>
        </authorList>
    </citation>
    <scope>NUCLEOTIDE SEQUENCE [GENOMIC DNA]</scope>
    <source>
        <strain>Pasteur</strain>
    </source>
</reference>
<reference key="2">
    <citation type="journal article" date="2002" name="Science">
        <title>Comparative genome sequencing for discovery of novel polymorphisms in Bacillus anthracis.</title>
        <authorList>
            <person name="Read T.D."/>
            <person name="Salzberg S.L."/>
            <person name="Pop M."/>
            <person name="Shumway M.F."/>
            <person name="Umayam L."/>
            <person name="Jiang L."/>
            <person name="Holtzapple E."/>
            <person name="Busch J.D."/>
            <person name="Smith K.L."/>
            <person name="Schupp J.M."/>
            <person name="Solomon D."/>
            <person name="Keim P."/>
            <person name="Fraser C.M."/>
        </authorList>
    </citation>
    <scope>NUCLEOTIDE SEQUENCE [GENOMIC DNA]</scope>
    <source>
        <strain>Ames / isolate Florida / A2012</strain>
    </source>
</reference>
<reference key="3">
    <citation type="journal article" date="2009" name="J. Bacteriol.">
        <title>The complete genome sequence of Bacillus anthracis Ames 'Ancestor'.</title>
        <authorList>
            <person name="Ravel J."/>
            <person name="Jiang L."/>
            <person name="Stanley S.T."/>
            <person name="Wilson M.R."/>
            <person name="Decker R.S."/>
            <person name="Read T.D."/>
            <person name="Worsham P."/>
            <person name="Keim P.S."/>
            <person name="Salzberg S.L."/>
            <person name="Fraser-Liggett C.M."/>
            <person name="Rasko D.A."/>
        </authorList>
    </citation>
    <scope>NUCLEOTIDE SEQUENCE [LARGE SCALE GENOMIC DNA]</scope>
    <source>
        <strain>Ames ancestor</strain>
    </source>
</reference>
<keyword id="KW-0472">Membrane</keyword>
<keyword id="KW-0614">Plasmid</keyword>
<keyword id="KW-1185">Reference proteome</keyword>
<keyword id="KW-0812">Transmembrane</keyword>
<keyword id="KW-1133">Transmembrane helix</keyword>
<sequence length="124" mass="13945">MNVLTYSSAKKQIIFMALYFVITGIVIRLIGYSLQGSLSAFTQAGIGDLLSGNFSVKDMFHFDFSFDMSQFDGFSLNMWGVFIKDKIHSVVNDMMPTTLGAINMLMLSKYLTLERAIKLGIKLY</sequence>
<name>Y6526_BACAN</name>
<feature type="chain" id="PRO_0000216843" description="Uncharacterized protein pXO2-27/BXB0026/GBAA_pXO2_0026">
    <location>
        <begin position="1"/>
        <end position="124"/>
    </location>
</feature>
<feature type="transmembrane region" description="Helical" evidence="1">
    <location>
        <begin position="13"/>
        <end position="33"/>
    </location>
</feature>
<organism>
    <name type="scientific">Bacillus anthracis</name>
    <dbReference type="NCBI Taxonomy" id="1392"/>
    <lineage>
        <taxon>Bacteria</taxon>
        <taxon>Bacillati</taxon>
        <taxon>Bacillota</taxon>
        <taxon>Bacilli</taxon>
        <taxon>Bacillales</taxon>
        <taxon>Bacillaceae</taxon>
        <taxon>Bacillus</taxon>
        <taxon>Bacillus cereus group</taxon>
    </lineage>
</organism>
<gene>
    <name type="ordered locus">pXO2-27</name>
    <name type="ordered locus">BXB0026</name>
    <name type="ordered locus">GBAA_pXO2_0026</name>
</gene>
<evidence type="ECO:0000255" key="1"/>
<evidence type="ECO:0000305" key="2"/>
<accession>Q9RN05</accession>
<comment type="subcellular location">
    <subcellularLocation>
        <location evidence="2">Membrane</location>
        <topology evidence="2">Single-pass membrane protein</topology>
    </subcellularLocation>
</comment>
<geneLocation type="plasmid">
    <name>pXO2</name>
</geneLocation>
<proteinExistence type="predicted"/>
<protein>
    <recommendedName>
        <fullName>Uncharacterized protein pXO2-27/BXB0026/GBAA_pXO2_0026</fullName>
    </recommendedName>
</protein>
<dbReference type="EMBL" id="AF188935">
    <property type="protein sequence ID" value="AAF13632.1"/>
    <property type="molecule type" value="Genomic_DNA"/>
</dbReference>
<dbReference type="EMBL" id="AE011191">
    <property type="protein sequence ID" value="AAM26186.1"/>
    <property type="molecule type" value="Genomic_DNA"/>
</dbReference>
<dbReference type="EMBL" id="AE017335">
    <property type="protein sequence ID" value="AAT28956.2"/>
    <property type="molecule type" value="Genomic_DNA"/>
</dbReference>
<dbReference type="RefSeq" id="NP_053182.1">
    <property type="nucleotide sequence ID" value="NC_002146.1"/>
</dbReference>
<dbReference type="RefSeq" id="WP_001101889.1">
    <property type="nucleotide sequence ID" value="NZ_VTZL01000009.1"/>
</dbReference>
<dbReference type="GeneID" id="45025338"/>
<dbReference type="KEGG" id="banh:HYU01_29130"/>
<dbReference type="KEGG" id="bar:GBAA_pXO2_0026"/>
<dbReference type="HOGENOM" id="CLU_1955145_0_0_9"/>
<dbReference type="OMA" id="SVINDMM"/>
<dbReference type="Proteomes" id="UP000000594">
    <property type="component" value="Plasmid pXO2"/>
</dbReference>
<dbReference type="GO" id="GO:0016020">
    <property type="term" value="C:membrane"/>
    <property type="evidence" value="ECO:0007669"/>
    <property type="project" value="UniProtKB-SubCell"/>
</dbReference>